<gene>
    <name evidence="1" type="primary">trpC</name>
    <name type="ordered locus">NATL1_17161</name>
</gene>
<comment type="catalytic activity">
    <reaction evidence="1">
        <text>1-(2-carboxyphenylamino)-1-deoxy-D-ribulose 5-phosphate + H(+) = (1S,2R)-1-C-(indol-3-yl)glycerol 3-phosphate + CO2 + H2O</text>
        <dbReference type="Rhea" id="RHEA:23476"/>
        <dbReference type="ChEBI" id="CHEBI:15377"/>
        <dbReference type="ChEBI" id="CHEBI:15378"/>
        <dbReference type="ChEBI" id="CHEBI:16526"/>
        <dbReference type="ChEBI" id="CHEBI:58613"/>
        <dbReference type="ChEBI" id="CHEBI:58866"/>
        <dbReference type="EC" id="4.1.1.48"/>
    </reaction>
</comment>
<comment type="pathway">
    <text evidence="1">Amino-acid biosynthesis; L-tryptophan biosynthesis; L-tryptophan from chorismate: step 4/5.</text>
</comment>
<comment type="similarity">
    <text evidence="1">Belongs to the TrpC family.</text>
</comment>
<feature type="chain" id="PRO_1000018520" description="Indole-3-glycerol phosphate synthase">
    <location>
        <begin position="1"/>
        <end position="295"/>
    </location>
</feature>
<name>TRPC_PROM1</name>
<sequence>MEIRRRPPNPSIKVANLEYAIPHPDSKPKNILEEIVWEKHLEVEIARKKVSLEDLKKKIKDLPKTKNFIDALRNSNSKPALISEIKKASPSRGIIREDFDAKMIGKMYQEGGANCISVLTDKKFFQGGFDVLVEVRKEIIIPILCKDFILYPYQLYQARAAGADAALLIAAILTDSDLKYLSKVAEHLGLTILVEVHDSEELERVLNINVFNLIGINNRNLKSFKTDLEVTKKLAKNYANQIKENSITLVSESGLFNREDLDLVKSYGADAVLVGESLMSQEDILGGVKKLVGNL</sequence>
<dbReference type="EC" id="4.1.1.48" evidence="1"/>
<dbReference type="EMBL" id="CP000553">
    <property type="protein sequence ID" value="ABM76272.1"/>
    <property type="molecule type" value="Genomic_DNA"/>
</dbReference>
<dbReference type="RefSeq" id="WP_011824273.1">
    <property type="nucleotide sequence ID" value="NC_008819.1"/>
</dbReference>
<dbReference type="SMR" id="A2C462"/>
<dbReference type="KEGG" id="pme:NATL1_17161"/>
<dbReference type="eggNOG" id="COG0134">
    <property type="taxonomic scope" value="Bacteria"/>
</dbReference>
<dbReference type="HOGENOM" id="CLU_034247_2_0_3"/>
<dbReference type="UniPathway" id="UPA00035">
    <property type="reaction ID" value="UER00043"/>
</dbReference>
<dbReference type="Proteomes" id="UP000002592">
    <property type="component" value="Chromosome"/>
</dbReference>
<dbReference type="GO" id="GO:0004425">
    <property type="term" value="F:indole-3-glycerol-phosphate synthase activity"/>
    <property type="evidence" value="ECO:0007669"/>
    <property type="project" value="UniProtKB-UniRule"/>
</dbReference>
<dbReference type="GO" id="GO:0004640">
    <property type="term" value="F:phosphoribosylanthranilate isomerase activity"/>
    <property type="evidence" value="ECO:0007669"/>
    <property type="project" value="TreeGrafter"/>
</dbReference>
<dbReference type="GO" id="GO:0000162">
    <property type="term" value="P:L-tryptophan biosynthetic process"/>
    <property type="evidence" value="ECO:0007669"/>
    <property type="project" value="UniProtKB-UniRule"/>
</dbReference>
<dbReference type="CDD" id="cd00331">
    <property type="entry name" value="IGPS"/>
    <property type="match status" value="1"/>
</dbReference>
<dbReference type="FunFam" id="3.20.20.70:FF:000024">
    <property type="entry name" value="Indole-3-glycerol phosphate synthase"/>
    <property type="match status" value="1"/>
</dbReference>
<dbReference type="Gene3D" id="3.20.20.70">
    <property type="entry name" value="Aldolase class I"/>
    <property type="match status" value="1"/>
</dbReference>
<dbReference type="HAMAP" id="MF_00134_B">
    <property type="entry name" value="IGPS_B"/>
    <property type="match status" value="1"/>
</dbReference>
<dbReference type="InterPro" id="IPR013785">
    <property type="entry name" value="Aldolase_TIM"/>
</dbReference>
<dbReference type="InterPro" id="IPR045186">
    <property type="entry name" value="Indole-3-glycerol_P_synth"/>
</dbReference>
<dbReference type="InterPro" id="IPR013798">
    <property type="entry name" value="Indole-3-glycerol_P_synth_dom"/>
</dbReference>
<dbReference type="InterPro" id="IPR001468">
    <property type="entry name" value="Indole-3-GlycerolPSynthase_CS"/>
</dbReference>
<dbReference type="InterPro" id="IPR011060">
    <property type="entry name" value="RibuloseP-bd_barrel"/>
</dbReference>
<dbReference type="NCBIfam" id="NF001372">
    <property type="entry name" value="PRK00278.1-4"/>
    <property type="match status" value="1"/>
</dbReference>
<dbReference type="NCBIfam" id="NF001377">
    <property type="entry name" value="PRK00278.2-4"/>
    <property type="match status" value="1"/>
</dbReference>
<dbReference type="PANTHER" id="PTHR22854:SF2">
    <property type="entry name" value="INDOLE-3-GLYCEROL-PHOSPHATE SYNTHASE"/>
    <property type="match status" value="1"/>
</dbReference>
<dbReference type="PANTHER" id="PTHR22854">
    <property type="entry name" value="TRYPTOPHAN BIOSYNTHESIS PROTEIN"/>
    <property type="match status" value="1"/>
</dbReference>
<dbReference type="Pfam" id="PF00218">
    <property type="entry name" value="IGPS"/>
    <property type="match status" value="1"/>
</dbReference>
<dbReference type="SUPFAM" id="SSF51366">
    <property type="entry name" value="Ribulose-phoshate binding barrel"/>
    <property type="match status" value="1"/>
</dbReference>
<dbReference type="PROSITE" id="PS00614">
    <property type="entry name" value="IGPS"/>
    <property type="match status" value="1"/>
</dbReference>
<evidence type="ECO:0000255" key="1">
    <source>
        <dbReference type="HAMAP-Rule" id="MF_00134"/>
    </source>
</evidence>
<proteinExistence type="inferred from homology"/>
<reference key="1">
    <citation type="journal article" date="2007" name="PLoS Genet.">
        <title>Patterns and implications of gene gain and loss in the evolution of Prochlorococcus.</title>
        <authorList>
            <person name="Kettler G.C."/>
            <person name="Martiny A.C."/>
            <person name="Huang K."/>
            <person name="Zucker J."/>
            <person name="Coleman M.L."/>
            <person name="Rodrigue S."/>
            <person name="Chen F."/>
            <person name="Lapidus A."/>
            <person name="Ferriera S."/>
            <person name="Johnson J."/>
            <person name="Steglich C."/>
            <person name="Church G.M."/>
            <person name="Richardson P."/>
            <person name="Chisholm S.W."/>
        </authorList>
    </citation>
    <scope>NUCLEOTIDE SEQUENCE [LARGE SCALE GENOMIC DNA]</scope>
    <source>
        <strain>NATL1A</strain>
    </source>
</reference>
<keyword id="KW-0028">Amino-acid biosynthesis</keyword>
<keyword id="KW-0057">Aromatic amino acid biosynthesis</keyword>
<keyword id="KW-0210">Decarboxylase</keyword>
<keyword id="KW-0456">Lyase</keyword>
<keyword id="KW-0822">Tryptophan biosynthesis</keyword>
<accession>A2C462</accession>
<organism>
    <name type="scientific">Prochlorococcus marinus (strain NATL1A)</name>
    <dbReference type="NCBI Taxonomy" id="167555"/>
    <lineage>
        <taxon>Bacteria</taxon>
        <taxon>Bacillati</taxon>
        <taxon>Cyanobacteriota</taxon>
        <taxon>Cyanophyceae</taxon>
        <taxon>Synechococcales</taxon>
        <taxon>Prochlorococcaceae</taxon>
        <taxon>Prochlorococcus</taxon>
    </lineage>
</organism>
<protein>
    <recommendedName>
        <fullName evidence="1">Indole-3-glycerol phosphate synthase</fullName>
        <shortName evidence="1">IGPS</shortName>
        <ecNumber evidence="1">4.1.1.48</ecNumber>
    </recommendedName>
</protein>